<accession>Q1LRB3</accession>
<gene>
    <name evidence="1" type="primary">purH</name>
    <name type="ordered locus">Rmet_0427</name>
</gene>
<reference key="1">
    <citation type="journal article" date="2010" name="PLoS ONE">
        <title>The complete genome sequence of Cupriavidus metallidurans strain CH34, a master survivalist in harsh and anthropogenic environments.</title>
        <authorList>
            <person name="Janssen P.J."/>
            <person name="Van Houdt R."/>
            <person name="Moors H."/>
            <person name="Monsieurs P."/>
            <person name="Morin N."/>
            <person name="Michaux A."/>
            <person name="Benotmane M.A."/>
            <person name="Leys N."/>
            <person name="Vallaeys T."/>
            <person name="Lapidus A."/>
            <person name="Monchy S."/>
            <person name="Medigue C."/>
            <person name="Taghavi S."/>
            <person name="McCorkle S."/>
            <person name="Dunn J."/>
            <person name="van der Lelie D."/>
            <person name="Mergeay M."/>
        </authorList>
    </citation>
    <scope>NUCLEOTIDE SEQUENCE [LARGE SCALE GENOMIC DNA]</scope>
    <source>
        <strain>ATCC 43123 / DSM 2839 / NBRC 102507 / CH34</strain>
    </source>
</reference>
<proteinExistence type="inferred from homology"/>
<organism>
    <name type="scientific">Cupriavidus metallidurans (strain ATCC 43123 / DSM 2839 / NBRC 102507 / CH34)</name>
    <name type="common">Ralstonia metallidurans</name>
    <dbReference type="NCBI Taxonomy" id="266264"/>
    <lineage>
        <taxon>Bacteria</taxon>
        <taxon>Pseudomonadati</taxon>
        <taxon>Pseudomonadota</taxon>
        <taxon>Betaproteobacteria</taxon>
        <taxon>Burkholderiales</taxon>
        <taxon>Burkholderiaceae</taxon>
        <taxon>Cupriavidus</taxon>
    </lineage>
</organism>
<name>PUR9_CUPMC</name>
<sequence length="524" mass="55982">MIKQALLSVSDKTGIVDFARELNALGVTLLSTGGTAKLLAEAGLPVTEVADYTGFPEMLDGRVKTLHPKVHGGILARRDLPEHMAALAEHNIPTIDLLVVNLYPFQQTVAKDDCTLPDAIENIDIGGPTMLRSAAKNHRDVTVIVDPADYAVVLGEMRANGNSVGYDTNFRLATKVFAHTAQYDGAITNYLTSLGADKSHQARSAYPQTLNLAFEKVQEMRYGENPHQSAAFYRDLKAFDGALANYVQLQGKELSYNNIADADAAWECVKSFDAANSAACVIIKHANPCGVAVGANALEAYDKAFKTDSTSAFGGIIAFNVELDEAAAQAVAKQFVEVLIAPSFSAAARNVFAAKQNVRLLEIPLGKGVNQYDLKRVGGGLLVQGPDARNVQPSELRVVTRRHPTPKEMDDLMFAWRVAKFVKSNAIVFCGNGMTLGVGAGQMSRVDSARIASIKAQNAGLTLAGSAVASDAFFPFRDGLDVVVDAGATCVIQPGGSMRDDEVIAAADERGIAMVLTGTRHFRH</sequence>
<feature type="chain" id="PRO_1000018946" description="Bifunctional purine biosynthesis protein PurH">
    <location>
        <begin position="1"/>
        <end position="524"/>
    </location>
</feature>
<feature type="domain" description="MGS-like" evidence="2">
    <location>
        <begin position="1"/>
        <end position="145"/>
    </location>
</feature>
<dbReference type="EC" id="2.1.2.3" evidence="1"/>
<dbReference type="EC" id="3.5.4.10" evidence="1"/>
<dbReference type="EMBL" id="CP000352">
    <property type="protein sequence ID" value="ABF07313.1"/>
    <property type="molecule type" value="Genomic_DNA"/>
</dbReference>
<dbReference type="RefSeq" id="WP_011515301.1">
    <property type="nucleotide sequence ID" value="NC_007973.1"/>
</dbReference>
<dbReference type="SMR" id="Q1LRB3"/>
<dbReference type="STRING" id="266264.Rmet_0427"/>
<dbReference type="KEGG" id="rme:Rmet_0427"/>
<dbReference type="eggNOG" id="COG0138">
    <property type="taxonomic scope" value="Bacteria"/>
</dbReference>
<dbReference type="HOGENOM" id="CLU_016316_5_2_4"/>
<dbReference type="UniPathway" id="UPA00074">
    <property type="reaction ID" value="UER00133"/>
</dbReference>
<dbReference type="UniPathway" id="UPA00074">
    <property type="reaction ID" value="UER00135"/>
</dbReference>
<dbReference type="Proteomes" id="UP000002429">
    <property type="component" value="Chromosome"/>
</dbReference>
<dbReference type="GO" id="GO:0005829">
    <property type="term" value="C:cytosol"/>
    <property type="evidence" value="ECO:0007669"/>
    <property type="project" value="TreeGrafter"/>
</dbReference>
<dbReference type="GO" id="GO:0003937">
    <property type="term" value="F:IMP cyclohydrolase activity"/>
    <property type="evidence" value="ECO:0007669"/>
    <property type="project" value="UniProtKB-UniRule"/>
</dbReference>
<dbReference type="GO" id="GO:0004643">
    <property type="term" value="F:phosphoribosylaminoimidazolecarboxamide formyltransferase activity"/>
    <property type="evidence" value="ECO:0007669"/>
    <property type="project" value="UniProtKB-UniRule"/>
</dbReference>
<dbReference type="GO" id="GO:0006189">
    <property type="term" value="P:'de novo' IMP biosynthetic process"/>
    <property type="evidence" value="ECO:0007669"/>
    <property type="project" value="UniProtKB-UniRule"/>
</dbReference>
<dbReference type="CDD" id="cd01421">
    <property type="entry name" value="IMPCH"/>
    <property type="match status" value="1"/>
</dbReference>
<dbReference type="FunFam" id="3.40.140.20:FF:000001">
    <property type="entry name" value="Bifunctional purine biosynthesis protein PurH"/>
    <property type="match status" value="1"/>
</dbReference>
<dbReference type="FunFam" id="3.40.140.20:FF:000002">
    <property type="entry name" value="Bifunctional purine biosynthesis protein PurH"/>
    <property type="match status" value="1"/>
</dbReference>
<dbReference type="FunFam" id="3.40.50.1380:FF:000001">
    <property type="entry name" value="Bifunctional purine biosynthesis protein PurH"/>
    <property type="match status" value="1"/>
</dbReference>
<dbReference type="Gene3D" id="3.40.140.20">
    <property type="match status" value="2"/>
</dbReference>
<dbReference type="Gene3D" id="3.40.50.1380">
    <property type="entry name" value="Methylglyoxal synthase-like domain"/>
    <property type="match status" value="1"/>
</dbReference>
<dbReference type="HAMAP" id="MF_00139">
    <property type="entry name" value="PurH"/>
    <property type="match status" value="1"/>
</dbReference>
<dbReference type="InterPro" id="IPR024051">
    <property type="entry name" value="AICAR_Tfase_dup_dom_sf"/>
</dbReference>
<dbReference type="InterPro" id="IPR016193">
    <property type="entry name" value="Cytidine_deaminase-like"/>
</dbReference>
<dbReference type="InterPro" id="IPR011607">
    <property type="entry name" value="MGS-like_dom"/>
</dbReference>
<dbReference type="InterPro" id="IPR036914">
    <property type="entry name" value="MGS-like_dom_sf"/>
</dbReference>
<dbReference type="InterPro" id="IPR002695">
    <property type="entry name" value="PurH-like"/>
</dbReference>
<dbReference type="NCBIfam" id="NF002049">
    <property type="entry name" value="PRK00881.1"/>
    <property type="match status" value="1"/>
</dbReference>
<dbReference type="NCBIfam" id="TIGR00355">
    <property type="entry name" value="purH"/>
    <property type="match status" value="1"/>
</dbReference>
<dbReference type="PANTHER" id="PTHR11692:SF0">
    <property type="entry name" value="BIFUNCTIONAL PURINE BIOSYNTHESIS PROTEIN ATIC"/>
    <property type="match status" value="1"/>
</dbReference>
<dbReference type="PANTHER" id="PTHR11692">
    <property type="entry name" value="BIFUNCTIONAL PURINE BIOSYNTHESIS PROTEIN PURH"/>
    <property type="match status" value="1"/>
</dbReference>
<dbReference type="Pfam" id="PF01808">
    <property type="entry name" value="AICARFT_IMPCHas"/>
    <property type="match status" value="1"/>
</dbReference>
<dbReference type="Pfam" id="PF02142">
    <property type="entry name" value="MGS"/>
    <property type="match status" value="1"/>
</dbReference>
<dbReference type="PIRSF" id="PIRSF000414">
    <property type="entry name" value="AICARFT_IMPCHas"/>
    <property type="match status" value="1"/>
</dbReference>
<dbReference type="SMART" id="SM00798">
    <property type="entry name" value="AICARFT_IMPCHas"/>
    <property type="match status" value="1"/>
</dbReference>
<dbReference type="SMART" id="SM00851">
    <property type="entry name" value="MGS"/>
    <property type="match status" value="1"/>
</dbReference>
<dbReference type="SUPFAM" id="SSF53927">
    <property type="entry name" value="Cytidine deaminase-like"/>
    <property type="match status" value="1"/>
</dbReference>
<dbReference type="SUPFAM" id="SSF52335">
    <property type="entry name" value="Methylglyoxal synthase-like"/>
    <property type="match status" value="1"/>
</dbReference>
<dbReference type="PROSITE" id="PS51855">
    <property type="entry name" value="MGS"/>
    <property type="match status" value="1"/>
</dbReference>
<comment type="catalytic activity">
    <reaction evidence="1">
        <text>(6R)-10-formyltetrahydrofolate + 5-amino-1-(5-phospho-beta-D-ribosyl)imidazole-4-carboxamide = 5-formamido-1-(5-phospho-D-ribosyl)imidazole-4-carboxamide + (6S)-5,6,7,8-tetrahydrofolate</text>
        <dbReference type="Rhea" id="RHEA:22192"/>
        <dbReference type="ChEBI" id="CHEBI:57453"/>
        <dbReference type="ChEBI" id="CHEBI:58467"/>
        <dbReference type="ChEBI" id="CHEBI:58475"/>
        <dbReference type="ChEBI" id="CHEBI:195366"/>
        <dbReference type="EC" id="2.1.2.3"/>
    </reaction>
</comment>
<comment type="catalytic activity">
    <reaction evidence="1">
        <text>IMP + H2O = 5-formamido-1-(5-phospho-D-ribosyl)imidazole-4-carboxamide</text>
        <dbReference type="Rhea" id="RHEA:18445"/>
        <dbReference type="ChEBI" id="CHEBI:15377"/>
        <dbReference type="ChEBI" id="CHEBI:58053"/>
        <dbReference type="ChEBI" id="CHEBI:58467"/>
        <dbReference type="EC" id="3.5.4.10"/>
    </reaction>
</comment>
<comment type="pathway">
    <text evidence="1">Purine metabolism; IMP biosynthesis via de novo pathway; 5-formamido-1-(5-phospho-D-ribosyl)imidazole-4-carboxamide from 5-amino-1-(5-phospho-D-ribosyl)imidazole-4-carboxamide (10-formyl THF route): step 1/1.</text>
</comment>
<comment type="pathway">
    <text evidence="1">Purine metabolism; IMP biosynthesis via de novo pathway; IMP from 5-formamido-1-(5-phospho-D-ribosyl)imidazole-4-carboxamide: step 1/1.</text>
</comment>
<comment type="domain">
    <text evidence="1">The IMP cyclohydrolase activity resides in the N-terminal region.</text>
</comment>
<comment type="similarity">
    <text evidence="1">Belongs to the PurH family.</text>
</comment>
<protein>
    <recommendedName>
        <fullName evidence="1">Bifunctional purine biosynthesis protein PurH</fullName>
    </recommendedName>
    <domain>
        <recommendedName>
            <fullName evidence="1">Phosphoribosylaminoimidazolecarboxamide formyltransferase</fullName>
            <ecNumber evidence="1">2.1.2.3</ecNumber>
        </recommendedName>
        <alternativeName>
            <fullName evidence="1">AICAR transformylase</fullName>
        </alternativeName>
    </domain>
    <domain>
        <recommendedName>
            <fullName evidence="1">IMP cyclohydrolase</fullName>
            <ecNumber evidence="1">3.5.4.10</ecNumber>
        </recommendedName>
        <alternativeName>
            <fullName evidence="1">ATIC</fullName>
        </alternativeName>
        <alternativeName>
            <fullName evidence="1">IMP synthase</fullName>
        </alternativeName>
        <alternativeName>
            <fullName evidence="1">Inosinicase</fullName>
        </alternativeName>
    </domain>
</protein>
<evidence type="ECO:0000255" key="1">
    <source>
        <dbReference type="HAMAP-Rule" id="MF_00139"/>
    </source>
</evidence>
<evidence type="ECO:0000255" key="2">
    <source>
        <dbReference type="PROSITE-ProRule" id="PRU01202"/>
    </source>
</evidence>
<keyword id="KW-0378">Hydrolase</keyword>
<keyword id="KW-0511">Multifunctional enzyme</keyword>
<keyword id="KW-0658">Purine biosynthesis</keyword>
<keyword id="KW-1185">Reference proteome</keyword>
<keyword id="KW-0808">Transferase</keyword>